<proteinExistence type="evidence at protein level"/>
<gene>
    <name type="primary">fliF</name>
    <name type="synonym">fla AII.1</name>
    <name type="synonym">fla BI</name>
    <name type="ordered locus">b1938</name>
    <name type="ordered locus">JW1922</name>
</gene>
<reference key="1">
    <citation type="submission" date="1997-01" db="EMBL/GenBank/DDBJ databases">
        <authorList>
            <person name="al Mamun A.A.M."/>
            <person name="Tominaga A."/>
            <person name="Enomoto M."/>
        </authorList>
    </citation>
    <scope>NUCLEOTIDE SEQUENCE [GENOMIC DNA]</scope>
    <source>
        <strain>K12 / W3110 / ATCC 27325 / DSM 5911</strain>
    </source>
</reference>
<reference key="2">
    <citation type="journal article" date="1996" name="DNA Res.">
        <title>A 460-kb DNA sequence of the Escherichia coli K-12 genome corresponding to the 40.1-50.0 min region on the linkage map.</title>
        <authorList>
            <person name="Itoh T."/>
            <person name="Aiba H."/>
            <person name="Baba T."/>
            <person name="Fujita K."/>
            <person name="Hayashi K."/>
            <person name="Inada T."/>
            <person name="Isono K."/>
            <person name="Kasai H."/>
            <person name="Kimura S."/>
            <person name="Kitakawa M."/>
            <person name="Kitagawa M."/>
            <person name="Makino K."/>
            <person name="Miki T."/>
            <person name="Mizobuchi K."/>
            <person name="Mori H."/>
            <person name="Mori T."/>
            <person name="Motomura K."/>
            <person name="Nakade S."/>
            <person name="Nakamura Y."/>
            <person name="Nashimoto H."/>
            <person name="Nishio Y."/>
            <person name="Oshima T."/>
            <person name="Saito N."/>
            <person name="Sampei G."/>
            <person name="Seki Y."/>
            <person name="Sivasundaram S."/>
            <person name="Tagami H."/>
            <person name="Takeda J."/>
            <person name="Takemoto K."/>
            <person name="Wada C."/>
            <person name="Yamamoto Y."/>
            <person name="Horiuchi T."/>
        </authorList>
    </citation>
    <scope>NUCLEOTIDE SEQUENCE [LARGE SCALE GENOMIC DNA]</scope>
    <source>
        <strain>K12 / W3110 / ATCC 27325 / DSM 5911</strain>
    </source>
</reference>
<reference key="3">
    <citation type="journal article" date="1997" name="Science">
        <title>The complete genome sequence of Escherichia coli K-12.</title>
        <authorList>
            <person name="Blattner F.R."/>
            <person name="Plunkett G. III"/>
            <person name="Bloch C.A."/>
            <person name="Perna N.T."/>
            <person name="Burland V."/>
            <person name="Riley M."/>
            <person name="Collado-Vides J."/>
            <person name="Glasner J.D."/>
            <person name="Rode C.K."/>
            <person name="Mayhew G.F."/>
            <person name="Gregor J."/>
            <person name="Davis N.W."/>
            <person name="Kirkpatrick H.A."/>
            <person name="Goeden M.A."/>
            <person name="Rose D.J."/>
            <person name="Mau B."/>
            <person name="Shao Y."/>
        </authorList>
    </citation>
    <scope>NUCLEOTIDE SEQUENCE [LARGE SCALE GENOMIC DNA]</scope>
    <source>
        <strain>K12 / MG1655 / ATCC 47076</strain>
    </source>
</reference>
<reference key="4">
    <citation type="journal article" date="2006" name="Mol. Syst. Biol.">
        <title>Highly accurate genome sequences of Escherichia coli K-12 strains MG1655 and W3110.</title>
        <authorList>
            <person name="Hayashi K."/>
            <person name="Morooka N."/>
            <person name="Yamamoto Y."/>
            <person name="Fujita K."/>
            <person name="Isono K."/>
            <person name="Choi S."/>
            <person name="Ohtsubo E."/>
            <person name="Baba T."/>
            <person name="Wanner B.L."/>
            <person name="Mori H."/>
            <person name="Horiuchi T."/>
        </authorList>
    </citation>
    <scope>NUCLEOTIDE SEQUENCE [LARGE SCALE GENOMIC DNA]</scope>
    <source>
        <strain>K12 / W3110 / ATCC 27325 / DSM 5911</strain>
    </source>
</reference>
<reference key="5">
    <citation type="journal article" date="1992" name="J. Bacteriol.">
        <title>Characterization of the fliE genes of Escherichia coli and Salmonella typhimurium and identification of the FliE protein as a component of the flagellar hook-basal body complex.</title>
        <authorList>
            <person name="Mueller V."/>
            <person name="Jones C.J."/>
            <person name="Kawagishi I."/>
            <person name="Aizawa S."/>
            <person name="Macnab R.M."/>
        </authorList>
    </citation>
    <scope>NUCLEOTIDE SEQUENCE [GENOMIC DNA] OF 1-5</scope>
    <source>
        <strain>JA11</strain>
    </source>
</reference>
<reference key="6">
    <citation type="journal article" date="1993" name="Gene">
        <title>Gene sequence, overproduction, purification and determination of the wild-type level of the Escherichia coli flagellar switch protein FliG.</title>
        <authorList>
            <person name="Roman S.J."/>
            <person name="Frantz B.B."/>
            <person name="Matsumura P."/>
        </authorList>
    </citation>
    <scope>NUCLEOTIDE SEQUENCE [GENOMIC DNA] OF 532-552</scope>
</reference>
<reference key="7">
    <citation type="journal article" date="2005" name="Science">
        <title>Global topology analysis of the Escherichia coli inner membrane proteome.</title>
        <authorList>
            <person name="Daley D.O."/>
            <person name="Rapp M."/>
            <person name="Granseth E."/>
            <person name="Melen K."/>
            <person name="Drew D."/>
            <person name="von Heijne G."/>
        </authorList>
    </citation>
    <scope>SUBCELLULAR LOCATION</scope>
    <source>
        <strain>K12 / MG1655 / ATCC 47076</strain>
    </source>
</reference>
<organism>
    <name type="scientific">Escherichia coli (strain K12)</name>
    <dbReference type="NCBI Taxonomy" id="83333"/>
    <lineage>
        <taxon>Bacteria</taxon>
        <taxon>Pseudomonadati</taxon>
        <taxon>Pseudomonadota</taxon>
        <taxon>Gammaproteobacteria</taxon>
        <taxon>Enterobacterales</taxon>
        <taxon>Enterobacteriaceae</taxon>
        <taxon>Escherichia</taxon>
    </lineage>
</organism>
<comment type="function">
    <text>The M ring may be actively involved in energy transduction.</text>
</comment>
<comment type="subunit">
    <text>The basal body constitutes a major portion of the flagellar organelle and consists of four rings (L,P,S, and M) mounted on a central rod. The M ring is integral to the inner membrane of the cell and may be connected to the flagellar rod via the S ring. The S (supramembrane ring) lies just distal to the M ring. The L and P rings lie in the outer membrane and the periplasmic space, respectively.</text>
</comment>
<comment type="interaction">
    <interactant intactId="EBI-1126492">
        <id>P25798</id>
    </interactant>
    <interactant intactId="EBI-1126524">
        <id>P0ABZ1</id>
        <label>fliG</label>
    </interactant>
    <organismsDiffer>false</organismsDiffer>
    <experiments>4</experiments>
</comment>
<comment type="subcellular location">
    <subcellularLocation>
        <location evidence="3">Cell inner membrane</location>
        <topology evidence="3">Multi-pass membrane protein</topology>
    </subcellularLocation>
    <subcellularLocation>
        <location evidence="3">Bacterial flagellum basal body</location>
    </subcellularLocation>
</comment>
<comment type="similarity">
    <text evidence="4">Belongs to the FliF family.</text>
</comment>
<dbReference type="EMBL" id="D89826">
    <property type="protein sequence ID" value="BAA14029.1"/>
    <property type="molecule type" value="Genomic_DNA"/>
</dbReference>
<dbReference type="EMBL" id="U00096">
    <property type="protein sequence ID" value="AAC75005.1"/>
    <property type="molecule type" value="Genomic_DNA"/>
</dbReference>
<dbReference type="EMBL" id="AP009048">
    <property type="protein sequence ID" value="BAA15763.1"/>
    <property type="molecule type" value="Genomic_DNA"/>
</dbReference>
<dbReference type="EMBL" id="M84992">
    <property type="status" value="NOT_ANNOTATED_CDS"/>
    <property type="molecule type" value="Genomic_DNA"/>
</dbReference>
<dbReference type="EMBL" id="L13243">
    <property type="status" value="NOT_ANNOTATED_CDS"/>
    <property type="molecule type" value="Genomic_DNA"/>
</dbReference>
<dbReference type="PIR" id="G64957">
    <property type="entry name" value="G64957"/>
</dbReference>
<dbReference type="RefSeq" id="NP_416448.1">
    <property type="nucleotide sequence ID" value="NC_000913.3"/>
</dbReference>
<dbReference type="RefSeq" id="WP_000994427.1">
    <property type="nucleotide sequence ID" value="NZ_LN832404.1"/>
</dbReference>
<dbReference type="SMR" id="P25798"/>
<dbReference type="BioGRID" id="4260383">
    <property type="interactions" value="23"/>
</dbReference>
<dbReference type="BioGRID" id="850802">
    <property type="interactions" value="1"/>
</dbReference>
<dbReference type="DIP" id="DIP-401N"/>
<dbReference type="FunCoup" id="P25798">
    <property type="interactions" value="154"/>
</dbReference>
<dbReference type="IntAct" id="P25798">
    <property type="interactions" value="4"/>
</dbReference>
<dbReference type="STRING" id="511145.b1938"/>
<dbReference type="PaxDb" id="511145-b1938"/>
<dbReference type="EnsemblBacteria" id="AAC75005">
    <property type="protein sequence ID" value="AAC75005"/>
    <property type="gene ID" value="b1938"/>
</dbReference>
<dbReference type="GeneID" id="946448"/>
<dbReference type="KEGG" id="ecj:JW1922"/>
<dbReference type="KEGG" id="eco:b1938"/>
<dbReference type="KEGG" id="ecoc:C3026_10980"/>
<dbReference type="PATRIC" id="fig|1411691.4.peg.313"/>
<dbReference type="EchoBASE" id="EB1323"/>
<dbReference type="eggNOG" id="COG1766">
    <property type="taxonomic scope" value="Bacteria"/>
</dbReference>
<dbReference type="HOGENOM" id="CLU_028108_1_0_6"/>
<dbReference type="InParanoid" id="P25798"/>
<dbReference type="OMA" id="FGTTSQM"/>
<dbReference type="OrthoDB" id="8554211at2"/>
<dbReference type="PhylomeDB" id="P25798"/>
<dbReference type="BioCyc" id="EcoCyc:FLIF-FLAGELLAR-MS-RING"/>
<dbReference type="PRO" id="PR:P25798"/>
<dbReference type="Proteomes" id="UP000000625">
    <property type="component" value="Chromosome"/>
</dbReference>
<dbReference type="GO" id="GO:0009431">
    <property type="term" value="C:bacterial-type flagellum basal body, MS ring"/>
    <property type="evidence" value="ECO:0000304"/>
    <property type="project" value="EcoCyc"/>
</dbReference>
<dbReference type="GO" id="GO:0005829">
    <property type="term" value="C:cytosol"/>
    <property type="evidence" value="ECO:0000255"/>
    <property type="project" value="EcoCyc"/>
</dbReference>
<dbReference type="GO" id="GO:0030288">
    <property type="term" value="C:outer membrane-bounded periplasmic space"/>
    <property type="evidence" value="ECO:0000255"/>
    <property type="project" value="EcoCyc"/>
</dbReference>
<dbReference type="GO" id="GO:0005886">
    <property type="term" value="C:plasma membrane"/>
    <property type="evidence" value="ECO:0000255"/>
    <property type="project" value="EcoCyc"/>
</dbReference>
<dbReference type="GO" id="GO:0003774">
    <property type="term" value="F:cytoskeletal motor activity"/>
    <property type="evidence" value="ECO:0007669"/>
    <property type="project" value="InterPro"/>
</dbReference>
<dbReference type="GO" id="GO:0071973">
    <property type="term" value="P:bacterial-type flagellum-dependent cell motility"/>
    <property type="evidence" value="ECO:0000304"/>
    <property type="project" value="EcoCyc"/>
</dbReference>
<dbReference type="Gene3D" id="3.30.300.30">
    <property type="match status" value="1"/>
</dbReference>
<dbReference type="InterPro" id="IPR045851">
    <property type="entry name" value="AMP-bd_C_sf"/>
</dbReference>
<dbReference type="InterPro" id="IPR013556">
    <property type="entry name" value="Flag_M-ring_C"/>
</dbReference>
<dbReference type="InterPro" id="IPR000067">
    <property type="entry name" value="FlgMring_FliF"/>
</dbReference>
<dbReference type="InterPro" id="IPR006182">
    <property type="entry name" value="FliF_N_dom"/>
</dbReference>
<dbReference type="InterPro" id="IPR043427">
    <property type="entry name" value="YscJ/FliF"/>
</dbReference>
<dbReference type="NCBIfam" id="TIGR00206">
    <property type="entry name" value="fliF"/>
    <property type="match status" value="1"/>
</dbReference>
<dbReference type="PANTHER" id="PTHR30046">
    <property type="entry name" value="FLAGELLAR M-RING PROTEIN"/>
    <property type="match status" value="1"/>
</dbReference>
<dbReference type="PANTHER" id="PTHR30046:SF0">
    <property type="entry name" value="FLAGELLAR M-RING PROTEIN"/>
    <property type="match status" value="1"/>
</dbReference>
<dbReference type="Pfam" id="PF01514">
    <property type="entry name" value="YscJ_FliF"/>
    <property type="match status" value="1"/>
</dbReference>
<dbReference type="Pfam" id="PF08345">
    <property type="entry name" value="YscJ_FliF_C"/>
    <property type="match status" value="1"/>
</dbReference>
<dbReference type="PIRSF" id="PIRSF004862">
    <property type="entry name" value="FliF"/>
    <property type="match status" value="1"/>
</dbReference>
<dbReference type="PRINTS" id="PR01009">
    <property type="entry name" value="FLGMRINGFLIF"/>
</dbReference>
<accession>P25798</accession>
<accession>P76324</accession>
<accession>P76914</accession>
<evidence type="ECO:0000255" key="1"/>
<evidence type="ECO:0000256" key="2">
    <source>
        <dbReference type="SAM" id="MobiDB-lite"/>
    </source>
</evidence>
<evidence type="ECO:0000269" key="3">
    <source>
    </source>
</evidence>
<evidence type="ECO:0000305" key="4"/>
<sequence length="552" mass="60589">MNATAAQTKSLEWLNRLRANPKIPLIVAGSAAVAVMVALILWAKAPDYRTLFSNLSDQDGGAIVSQLTQMNIPYRFSEASGAIEVPADKVHELRLRLAQQGLPKGGAVGFELLDQEKFGISQFSEQVNYQRALEGELSRTIETIGPVKGARVHLAMPKPSLFVREQKSPSASVTVNLLPGRALDEGQISAIVHLVSSAVAGLPPGNVTLVDQGGHLLTQSNTSGRDLNDAQLKYASDVEGRIQRRIEAILSPIVGNGNIHAQVTAQLDFASKEQTEEQYRPNGDESHAALRSRQLNESEQSGSGYPGGVPGALSNQPAPANNAPISTPPANQNNRQQQASTTSNSGPRSTQRNETSNYEVDRTIRHTKMNVGDVQRLSVAVVVNYKTLPDGKPLPLSNEQMKQIEDLTREAMGFSEKRGDSLNVVNSPFNSSDESGGELPFWQQQAFIDQLLAAGRWLLVLLVAWLLWRKAVRPQLTRRAEAMKAVQQQAQAREEVEDAVEVRLSKDEQLQQRRANQRLGAEVMSQRIREMSDNDPRVVALVIRQWINNDHE</sequence>
<name>FLIF_ECOLI</name>
<protein>
    <recommendedName>
        <fullName>Flagellar M-ring protein</fullName>
    </recommendedName>
</protein>
<keyword id="KW-0975">Bacterial flagellum</keyword>
<keyword id="KW-0997">Cell inner membrane</keyword>
<keyword id="KW-1003">Cell membrane</keyword>
<keyword id="KW-0472">Membrane</keyword>
<keyword id="KW-1185">Reference proteome</keyword>
<keyword id="KW-0812">Transmembrane</keyword>
<keyword id="KW-1133">Transmembrane helix</keyword>
<feature type="chain" id="PRO_0000180882" description="Flagellar M-ring protein">
    <location>
        <begin position="1"/>
        <end position="552"/>
    </location>
</feature>
<feature type="transmembrane region" description="Helical" evidence="1">
    <location>
        <begin position="23"/>
        <end position="43"/>
    </location>
</feature>
<feature type="transmembrane region" description="Helical" evidence="1">
    <location>
        <begin position="447"/>
        <end position="467"/>
    </location>
</feature>
<feature type="region of interest" description="Disordered" evidence="2">
    <location>
        <begin position="272"/>
        <end position="362"/>
    </location>
</feature>
<feature type="compositionally biased region" description="Basic and acidic residues" evidence="2">
    <location>
        <begin position="272"/>
        <end position="288"/>
    </location>
</feature>
<feature type="compositionally biased region" description="Polar residues" evidence="2">
    <location>
        <begin position="293"/>
        <end position="303"/>
    </location>
</feature>
<feature type="compositionally biased region" description="Polar residues" evidence="2">
    <location>
        <begin position="313"/>
        <end position="325"/>
    </location>
</feature>
<feature type="compositionally biased region" description="Low complexity" evidence="2">
    <location>
        <begin position="328"/>
        <end position="345"/>
    </location>
</feature>
<feature type="compositionally biased region" description="Polar residues" evidence="2">
    <location>
        <begin position="346"/>
        <end position="358"/>
    </location>
</feature>
<feature type="sequence conflict" description="In Ref. 1; BAA14029." evidence="4" ref="1">
    <original>H</original>
    <variation>R</variation>
    <location>
        <position position="260"/>
    </location>
</feature>
<feature type="sequence conflict" description="In Ref. 1; BAA14029." evidence="4" ref="1">
    <original>Q</original>
    <variation>H</variation>
    <location>
        <position position="266"/>
    </location>
</feature>
<feature type="sequence conflict" description="In Ref. 1." evidence="4" ref="1">
    <original>L</original>
    <variation>V</variation>
    <location>
        <position position="541"/>
    </location>
</feature>